<sequence length="353" mass="40652">MTVRDWANRGQTYVNARAPNLLGRFRSTDDEDENNPSTELATDTTSAYGSTAASVVTMANSKPDDVSLYATSSHHHEYFTGSAWIHPVYTKEQMDALEVNHRKTETFSDRVALRAILLMRIIFDLCTGYKHPKEGEAHLPKFRMTTRQWLDRFLFLESIAGVPGMVAGMIRHLHSLRALRRDRAWIESLVEEAYNERMHLLTFLKLQKPSVQMRTGLLIGQIIFYNLFFISYLISPATCHRFVGYLEEEAVITYTRCLEDIDAGRLPELASMEVPDIARTYWHMEDDCTMRDLIQYVRADEAKHCEVNHTFGNLHQTSDRNPFALVIDNGRPQPSKDLTTFRSVGWRRDEIAN</sequence>
<organism>
    <name type="scientific">Yarrowia lipolytica (strain CLIB 122 / E 150)</name>
    <name type="common">Yeast</name>
    <name type="synonym">Candida lipolytica</name>
    <dbReference type="NCBI Taxonomy" id="284591"/>
    <lineage>
        <taxon>Eukaryota</taxon>
        <taxon>Fungi</taxon>
        <taxon>Dikarya</taxon>
        <taxon>Ascomycota</taxon>
        <taxon>Saccharomycotina</taxon>
        <taxon>Dipodascomycetes</taxon>
        <taxon>Dipodascales</taxon>
        <taxon>Dipodascales incertae sedis</taxon>
        <taxon>Yarrowia</taxon>
    </lineage>
</organism>
<protein>
    <recommendedName>
        <fullName>Alternative oxidase, mitochondrial</fullName>
        <ecNumber>1.-.-.-</ecNumber>
    </recommendedName>
</protein>
<reference key="1">
    <citation type="submission" date="2002-01" db="EMBL/GenBank/DDBJ databases">
        <title>Yarrowia lipolytica, a yeast system for the new millenium in complex I genetics.</title>
        <authorList>
            <person name="Kerscher S.J."/>
            <person name="Zickermann V."/>
            <person name="Zwicker K."/>
            <person name="Casaregola S."/>
            <person name="Brandt U."/>
        </authorList>
    </citation>
    <scope>NUCLEOTIDE SEQUENCE [GENOMIC DNA]</scope>
    <source>
        <strain>CLIB 122 / E 150</strain>
    </source>
</reference>
<reference key="2">
    <citation type="journal article" date="2004" name="Nature">
        <title>Genome evolution in yeasts.</title>
        <authorList>
            <person name="Dujon B."/>
            <person name="Sherman D."/>
            <person name="Fischer G."/>
            <person name="Durrens P."/>
            <person name="Casaregola S."/>
            <person name="Lafontaine I."/>
            <person name="de Montigny J."/>
            <person name="Marck C."/>
            <person name="Neuveglise C."/>
            <person name="Talla E."/>
            <person name="Goffard N."/>
            <person name="Frangeul L."/>
            <person name="Aigle M."/>
            <person name="Anthouard V."/>
            <person name="Babour A."/>
            <person name="Barbe V."/>
            <person name="Barnay S."/>
            <person name="Blanchin S."/>
            <person name="Beckerich J.-M."/>
            <person name="Beyne E."/>
            <person name="Bleykasten C."/>
            <person name="Boisrame A."/>
            <person name="Boyer J."/>
            <person name="Cattolico L."/>
            <person name="Confanioleri F."/>
            <person name="de Daruvar A."/>
            <person name="Despons L."/>
            <person name="Fabre E."/>
            <person name="Fairhead C."/>
            <person name="Ferry-Dumazet H."/>
            <person name="Groppi A."/>
            <person name="Hantraye F."/>
            <person name="Hennequin C."/>
            <person name="Jauniaux N."/>
            <person name="Joyet P."/>
            <person name="Kachouri R."/>
            <person name="Kerrest A."/>
            <person name="Koszul R."/>
            <person name="Lemaire M."/>
            <person name="Lesur I."/>
            <person name="Ma L."/>
            <person name="Muller H."/>
            <person name="Nicaud J.-M."/>
            <person name="Nikolski M."/>
            <person name="Oztas S."/>
            <person name="Ozier-Kalogeropoulos O."/>
            <person name="Pellenz S."/>
            <person name="Potier S."/>
            <person name="Richard G.-F."/>
            <person name="Straub M.-L."/>
            <person name="Suleau A."/>
            <person name="Swennen D."/>
            <person name="Tekaia F."/>
            <person name="Wesolowski-Louvel M."/>
            <person name="Westhof E."/>
            <person name="Wirth B."/>
            <person name="Zeniou-Meyer M."/>
            <person name="Zivanovic Y."/>
            <person name="Bolotin-Fukuhara M."/>
            <person name="Thierry A."/>
            <person name="Bouchier C."/>
            <person name="Caudron B."/>
            <person name="Scarpelli C."/>
            <person name="Gaillardin C."/>
            <person name="Weissenbach J."/>
            <person name="Wincker P."/>
            <person name="Souciet J.-L."/>
        </authorList>
    </citation>
    <scope>NUCLEOTIDE SEQUENCE [LARGE SCALE GENOMIC DNA]</scope>
    <source>
        <strain>CLIB 122 / E 150</strain>
    </source>
</reference>
<comment type="function">
    <text evidence="1">Catalyzes cyanide-resistant oxygen consumption. May increase respiration when the cytochrome respiratory pathway is restricted, or in response to low temperatures (By similarity).</text>
</comment>
<comment type="cofactor">
    <cofactor evidence="2">
        <name>Fe cation</name>
        <dbReference type="ChEBI" id="CHEBI:24875"/>
    </cofactor>
    <text evidence="2">Binds 2 iron ions per subunit.</text>
</comment>
<comment type="subcellular location">
    <subcellularLocation>
        <location evidence="1">Mitochondrion inner membrane</location>
        <topology evidence="1">Multi-pass membrane protein</topology>
        <orientation evidence="1">Matrix side</orientation>
    </subcellularLocation>
</comment>
<comment type="similarity">
    <text evidence="5">Belongs to the alternative oxidase family.</text>
</comment>
<accession>Q8J0I8</accession>
<accession>Q6C7H4</accession>
<keyword id="KW-0249">Electron transport</keyword>
<keyword id="KW-0408">Iron</keyword>
<keyword id="KW-0472">Membrane</keyword>
<keyword id="KW-0479">Metal-binding</keyword>
<keyword id="KW-0496">Mitochondrion</keyword>
<keyword id="KW-0999">Mitochondrion inner membrane</keyword>
<keyword id="KW-0560">Oxidoreductase</keyword>
<keyword id="KW-1185">Reference proteome</keyword>
<keyword id="KW-0679">Respiratory chain</keyword>
<keyword id="KW-0809">Transit peptide</keyword>
<keyword id="KW-0812">Transmembrane</keyword>
<keyword id="KW-1133">Transmembrane helix</keyword>
<keyword id="KW-0813">Transport</keyword>
<dbReference type="EC" id="1.-.-.-"/>
<dbReference type="EMBL" id="AJ428416">
    <property type="protein sequence ID" value="CAD21442.1"/>
    <property type="molecule type" value="Genomic_DNA"/>
</dbReference>
<dbReference type="EMBL" id="CR382131">
    <property type="protein sequence ID" value="CAG78967.1"/>
    <property type="molecule type" value="Genomic_DNA"/>
</dbReference>
<dbReference type="RefSeq" id="XP_503388.1">
    <property type="nucleotide sequence ID" value="XM_503388.1"/>
</dbReference>
<dbReference type="SMR" id="Q8J0I8"/>
<dbReference type="STRING" id="284591.Q8J0I8"/>
<dbReference type="EnsemblFungi" id="CAG78967">
    <property type="protein sequence ID" value="CAG78967"/>
    <property type="gene ID" value="YALI0_E00814g"/>
</dbReference>
<dbReference type="KEGG" id="yli:2912419"/>
<dbReference type="VEuPathDB" id="FungiDB:YALI0_E00814g"/>
<dbReference type="HOGENOM" id="CLU_041974_2_1_1"/>
<dbReference type="InParanoid" id="Q8J0I8"/>
<dbReference type="OrthoDB" id="106135at4891"/>
<dbReference type="Proteomes" id="UP000001300">
    <property type="component" value="Chromosome E"/>
</dbReference>
<dbReference type="GO" id="GO:0005743">
    <property type="term" value="C:mitochondrial inner membrane"/>
    <property type="evidence" value="ECO:0007669"/>
    <property type="project" value="UniProtKB-SubCell"/>
</dbReference>
<dbReference type="GO" id="GO:0005739">
    <property type="term" value="C:mitochondrion"/>
    <property type="evidence" value="ECO:0000318"/>
    <property type="project" value="GO_Central"/>
</dbReference>
<dbReference type="GO" id="GO:0009916">
    <property type="term" value="F:alternative oxidase activity"/>
    <property type="evidence" value="ECO:0000318"/>
    <property type="project" value="GO_Central"/>
</dbReference>
<dbReference type="GO" id="GO:0046872">
    <property type="term" value="F:metal ion binding"/>
    <property type="evidence" value="ECO:0007669"/>
    <property type="project" value="UniProtKB-KW"/>
</dbReference>
<dbReference type="GO" id="GO:0010230">
    <property type="term" value="P:alternative respiration"/>
    <property type="evidence" value="ECO:0000318"/>
    <property type="project" value="GO_Central"/>
</dbReference>
<dbReference type="CDD" id="cd01053">
    <property type="entry name" value="AOX"/>
    <property type="match status" value="1"/>
</dbReference>
<dbReference type="FunFam" id="1.20.1260.140:FF:000002">
    <property type="entry name" value="Alternative oxidase"/>
    <property type="match status" value="1"/>
</dbReference>
<dbReference type="Gene3D" id="1.20.1260.140">
    <property type="entry name" value="Alternative oxidase"/>
    <property type="match status" value="1"/>
</dbReference>
<dbReference type="InterPro" id="IPR002680">
    <property type="entry name" value="AOX"/>
</dbReference>
<dbReference type="InterPro" id="IPR038659">
    <property type="entry name" value="AOX_sf"/>
</dbReference>
<dbReference type="PANTHER" id="PTHR31803">
    <property type="entry name" value="ALTERNATIVE OXIDASE"/>
    <property type="match status" value="1"/>
</dbReference>
<dbReference type="PANTHER" id="PTHR31803:SF3">
    <property type="entry name" value="ALTERNATIVE OXIDASE"/>
    <property type="match status" value="1"/>
</dbReference>
<dbReference type="Pfam" id="PF01786">
    <property type="entry name" value="AOX"/>
    <property type="match status" value="1"/>
</dbReference>
<dbReference type="PIRSF" id="PIRSF005229">
    <property type="entry name" value="AOX"/>
    <property type="match status" value="1"/>
</dbReference>
<gene>
    <name type="primary">AOX</name>
    <name type="ordered locus">YALI0E00814g</name>
</gene>
<evidence type="ECO:0000250" key="1"/>
<evidence type="ECO:0000250" key="2">
    <source>
        <dbReference type="UniProtKB" id="Q26710"/>
    </source>
</evidence>
<evidence type="ECO:0000255" key="3"/>
<evidence type="ECO:0000256" key="4">
    <source>
        <dbReference type="SAM" id="MobiDB-lite"/>
    </source>
</evidence>
<evidence type="ECO:0000305" key="5"/>
<name>AOX_YARLI</name>
<proteinExistence type="inferred from homology"/>
<feature type="transit peptide" description="Mitochondrion" evidence="3">
    <location>
        <begin position="1"/>
        <end status="unknown"/>
    </location>
</feature>
<feature type="chain" id="PRO_0000001729" description="Alternative oxidase, mitochondrial">
    <location>
        <begin status="unknown"/>
        <end position="353"/>
    </location>
</feature>
<feature type="transmembrane region" description="Helical" evidence="3">
    <location>
        <begin position="153"/>
        <end position="173"/>
    </location>
</feature>
<feature type="transmembrane region" description="Helical" evidence="3">
    <location>
        <begin position="217"/>
        <end position="237"/>
    </location>
</feature>
<feature type="region of interest" description="Disordered" evidence="4">
    <location>
        <begin position="25"/>
        <end position="45"/>
    </location>
</feature>
<feature type="compositionally biased region" description="Polar residues" evidence="4">
    <location>
        <begin position="35"/>
        <end position="45"/>
    </location>
</feature>
<feature type="binding site" evidence="2">
    <location>
        <position position="157"/>
    </location>
    <ligand>
        <name>Fe cation</name>
        <dbReference type="ChEBI" id="CHEBI:24875"/>
        <label>1</label>
    </ligand>
</feature>
<feature type="binding site" evidence="2">
    <location>
        <position position="196"/>
    </location>
    <ligand>
        <name>Fe cation</name>
        <dbReference type="ChEBI" id="CHEBI:24875"/>
        <label>1</label>
    </ligand>
</feature>
<feature type="binding site" evidence="2">
    <location>
        <position position="196"/>
    </location>
    <ligand>
        <name>Fe cation</name>
        <dbReference type="ChEBI" id="CHEBI:24875"/>
        <label>2</label>
    </ligand>
</feature>
<feature type="binding site" evidence="2">
    <location>
        <position position="199"/>
    </location>
    <ligand>
        <name>Fe cation</name>
        <dbReference type="ChEBI" id="CHEBI:24875"/>
        <label>1</label>
    </ligand>
</feature>
<feature type="binding site" evidence="2">
    <location>
        <position position="247"/>
    </location>
    <ligand>
        <name>Fe cation</name>
        <dbReference type="ChEBI" id="CHEBI:24875"/>
        <label>2</label>
    </ligand>
</feature>
<feature type="binding site" evidence="2">
    <location>
        <position position="301"/>
    </location>
    <ligand>
        <name>Fe cation</name>
        <dbReference type="ChEBI" id="CHEBI:24875"/>
        <label>1</label>
    </ligand>
</feature>
<feature type="binding site" evidence="2">
    <location>
        <position position="301"/>
    </location>
    <ligand>
        <name>Fe cation</name>
        <dbReference type="ChEBI" id="CHEBI:24875"/>
        <label>2</label>
    </ligand>
</feature>
<feature type="binding site" evidence="2">
    <location>
        <position position="304"/>
    </location>
    <ligand>
        <name>Fe cation</name>
        <dbReference type="ChEBI" id="CHEBI:24875"/>
        <label>2</label>
    </ligand>
</feature>